<protein>
    <recommendedName>
        <fullName evidence="1">NADH-quinone oxidoreductase subunit H</fullName>
        <ecNumber evidence="1">7.1.1.-</ecNumber>
    </recommendedName>
    <alternativeName>
        <fullName evidence="1">NADH dehydrogenase I subunit H</fullName>
    </alternativeName>
    <alternativeName>
        <fullName evidence="1">NDH-1 subunit H</fullName>
    </alternativeName>
</protein>
<dbReference type="EC" id="7.1.1.-" evidence="1"/>
<dbReference type="EMBL" id="AE017223">
    <property type="protein sequence ID" value="AAX74190.1"/>
    <property type="molecule type" value="Genomic_DNA"/>
</dbReference>
<dbReference type="RefSeq" id="WP_002963944.1">
    <property type="nucleotide sequence ID" value="NC_006932.1"/>
</dbReference>
<dbReference type="SMR" id="Q57DU4"/>
<dbReference type="EnsemblBacteria" id="AAX74190">
    <property type="protein sequence ID" value="AAX74190"/>
    <property type="gene ID" value="BruAb1_0823"/>
</dbReference>
<dbReference type="GeneID" id="97533884"/>
<dbReference type="KEGG" id="bmb:BruAb1_0823"/>
<dbReference type="HOGENOM" id="CLU_015134_0_1_5"/>
<dbReference type="Proteomes" id="UP000000540">
    <property type="component" value="Chromosome I"/>
</dbReference>
<dbReference type="GO" id="GO:0005886">
    <property type="term" value="C:plasma membrane"/>
    <property type="evidence" value="ECO:0007669"/>
    <property type="project" value="UniProtKB-SubCell"/>
</dbReference>
<dbReference type="GO" id="GO:0003954">
    <property type="term" value="F:NADH dehydrogenase activity"/>
    <property type="evidence" value="ECO:0007669"/>
    <property type="project" value="TreeGrafter"/>
</dbReference>
<dbReference type="GO" id="GO:0016655">
    <property type="term" value="F:oxidoreductase activity, acting on NAD(P)H, quinone or similar compound as acceptor"/>
    <property type="evidence" value="ECO:0007669"/>
    <property type="project" value="UniProtKB-UniRule"/>
</dbReference>
<dbReference type="GO" id="GO:0048038">
    <property type="term" value="F:quinone binding"/>
    <property type="evidence" value="ECO:0007669"/>
    <property type="project" value="UniProtKB-KW"/>
</dbReference>
<dbReference type="GO" id="GO:0009060">
    <property type="term" value="P:aerobic respiration"/>
    <property type="evidence" value="ECO:0007669"/>
    <property type="project" value="TreeGrafter"/>
</dbReference>
<dbReference type="HAMAP" id="MF_01350">
    <property type="entry name" value="NDH1_NuoH"/>
    <property type="match status" value="1"/>
</dbReference>
<dbReference type="InterPro" id="IPR001694">
    <property type="entry name" value="NADH_UbQ_OxRdtase_su1/FPO"/>
</dbReference>
<dbReference type="InterPro" id="IPR018086">
    <property type="entry name" value="NADH_UbQ_OxRdtase_su1_CS"/>
</dbReference>
<dbReference type="NCBIfam" id="NF004741">
    <property type="entry name" value="PRK06076.1-2"/>
    <property type="match status" value="1"/>
</dbReference>
<dbReference type="NCBIfam" id="NF004745">
    <property type="entry name" value="PRK06076.1-6"/>
    <property type="match status" value="1"/>
</dbReference>
<dbReference type="PANTHER" id="PTHR11432">
    <property type="entry name" value="NADH DEHYDROGENASE SUBUNIT 1"/>
    <property type="match status" value="1"/>
</dbReference>
<dbReference type="PANTHER" id="PTHR11432:SF3">
    <property type="entry name" value="NADH-UBIQUINONE OXIDOREDUCTASE CHAIN 1"/>
    <property type="match status" value="1"/>
</dbReference>
<dbReference type="Pfam" id="PF00146">
    <property type="entry name" value="NADHdh"/>
    <property type="match status" value="1"/>
</dbReference>
<dbReference type="PROSITE" id="PS00668">
    <property type="entry name" value="COMPLEX1_ND1_2"/>
    <property type="match status" value="1"/>
</dbReference>
<sequence length="347" mass="38428">MEGIFAAYVLPALIIALKSVVLLVVLLIVVAYLLYADRKIWAAVQLRRGPNVVGPWGLFQAFADLLKFVFKEPIIPSGANKGVFLLAPFISAVLAMATWAVIPVNEGWAVANINVGILYIFAISSLEVYGVIMGGWASNSKYPFLGALRSAAQMVSYEVSIGFVIVTVLLTVGSLNLTDIVLSQNTGLGTMLGLPASFLDWNWLCLFPMFVVFFISALAETNRPPFDLVEAESELVAGHMIEYSSTPFLLFFLGEYVAITLMCALMTVLFLGGWLPPVDVWFLSWVPGIIWFMLKLCFCFFLFAMVKAFVPRYRYDQLMRLGWKVFLPISLFMVVATATFLKVFGLA</sequence>
<name>NUOH_BRUAB</name>
<comment type="function">
    <text evidence="1">NDH-1 shuttles electrons from NADH, via FMN and iron-sulfur (Fe-S) centers, to quinones in the respiratory chain. The immediate electron acceptor for the enzyme in this species is believed to be ubiquinone. Couples the redox reaction to proton translocation (for every two electrons transferred, four hydrogen ions are translocated across the cytoplasmic membrane), and thus conserves the redox energy in a proton gradient. This subunit may bind ubiquinone.</text>
</comment>
<comment type="catalytic activity">
    <reaction evidence="1">
        <text>a quinone + NADH + 5 H(+)(in) = a quinol + NAD(+) + 4 H(+)(out)</text>
        <dbReference type="Rhea" id="RHEA:57888"/>
        <dbReference type="ChEBI" id="CHEBI:15378"/>
        <dbReference type="ChEBI" id="CHEBI:24646"/>
        <dbReference type="ChEBI" id="CHEBI:57540"/>
        <dbReference type="ChEBI" id="CHEBI:57945"/>
        <dbReference type="ChEBI" id="CHEBI:132124"/>
    </reaction>
</comment>
<comment type="subunit">
    <text evidence="1">NDH-1 is composed of 14 different subunits. Subunits NuoA, H, J, K, L, M, N constitute the membrane sector of the complex.</text>
</comment>
<comment type="subcellular location">
    <subcellularLocation>
        <location evidence="1">Cell inner membrane</location>
        <topology evidence="1">Multi-pass membrane protein</topology>
    </subcellularLocation>
</comment>
<comment type="similarity">
    <text evidence="1">Belongs to the complex I subunit 1 family.</text>
</comment>
<feature type="chain" id="PRO_0000244901" description="NADH-quinone oxidoreductase subunit H">
    <location>
        <begin position="1"/>
        <end position="347"/>
    </location>
</feature>
<feature type="transmembrane region" description="Helical" evidence="1">
    <location>
        <begin position="13"/>
        <end position="33"/>
    </location>
</feature>
<feature type="transmembrane region" description="Helical" evidence="1">
    <location>
        <begin position="50"/>
        <end position="70"/>
    </location>
</feature>
<feature type="transmembrane region" description="Helical" evidence="1">
    <location>
        <begin position="82"/>
        <end position="102"/>
    </location>
</feature>
<feature type="transmembrane region" description="Helical" evidence="1">
    <location>
        <begin position="115"/>
        <end position="135"/>
    </location>
</feature>
<feature type="transmembrane region" description="Helical" evidence="1">
    <location>
        <begin position="161"/>
        <end position="181"/>
    </location>
</feature>
<feature type="transmembrane region" description="Helical" evidence="1">
    <location>
        <begin position="198"/>
        <end position="218"/>
    </location>
</feature>
<feature type="transmembrane region" description="Helical" evidence="1">
    <location>
        <begin position="248"/>
        <end position="268"/>
    </location>
</feature>
<feature type="transmembrane region" description="Helical" evidence="1">
    <location>
        <begin position="286"/>
        <end position="306"/>
    </location>
</feature>
<feature type="transmembrane region" description="Helical" evidence="1">
    <location>
        <begin position="325"/>
        <end position="345"/>
    </location>
</feature>
<accession>Q57DU4</accession>
<organism>
    <name type="scientific">Brucella abortus biovar 1 (strain 9-941)</name>
    <dbReference type="NCBI Taxonomy" id="262698"/>
    <lineage>
        <taxon>Bacteria</taxon>
        <taxon>Pseudomonadati</taxon>
        <taxon>Pseudomonadota</taxon>
        <taxon>Alphaproteobacteria</taxon>
        <taxon>Hyphomicrobiales</taxon>
        <taxon>Brucellaceae</taxon>
        <taxon>Brucella/Ochrobactrum group</taxon>
        <taxon>Brucella</taxon>
    </lineage>
</organism>
<keyword id="KW-0997">Cell inner membrane</keyword>
<keyword id="KW-1003">Cell membrane</keyword>
<keyword id="KW-0472">Membrane</keyword>
<keyword id="KW-0520">NAD</keyword>
<keyword id="KW-0874">Quinone</keyword>
<keyword id="KW-1278">Translocase</keyword>
<keyword id="KW-0812">Transmembrane</keyword>
<keyword id="KW-1133">Transmembrane helix</keyword>
<keyword id="KW-0830">Ubiquinone</keyword>
<reference key="1">
    <citation type="journal article" date="2005" name="J. Bacteriol.">
        <title>Completion of the genome sequence of Brucella abortus and comparison to the highly similar genomes of Brucella melitensis and Brucella suis.</title>
        <authorList>
            <person name="Halling S.M."/>
            <person name="Peterson-Burch B.D."/>
            <person name="Bricker B.J."/>
            <person name="Zuerner R.L."/>
            <person name="Qing Z."/>
            <person name="Li L.-L."/>
            <person name="Kapur V."/>
            <person name="Alt D.P."/>
            <person name="Olsen S.C."/>
        </authorList>
    </citation>
    <scope>NUCLEOTIDE SEQUENCE [LARGE SCALE GENOMIC DNA]</scope>
    <source>
        <strain>9-941</strain>
    </source>
</reference>
<proteinExistence type="inferred from homology"/>
<gene>
    <name evidence="1" type="primary">nuoH</name>
    <name type="ordered locus">BruAb1_0823</name>
</gene>
<evidence type="ECO:0000255" key="1">
    <source>
        <dbReference type="HAMAP-Rule" id="MF_01350"/>
    </source>
</evidence>